<keyword id="KW-0012">Acyltransferase</keyword>
<keyword id="KW-0441">Lipid A biosynthesis</keyword>
<keyword id="KW-0444">Lipid biosynthesis</keyword>
<keyword id="KW-0443">Lipid metabolism</keyword>
<keyword id="KW-1185">Reference proteome</keyword>
<keyword id="KW-0677">Repeat</keyword>
<keyword id="KW-0808">Transferase</keyword>
<dbReference type="EC" id="2.3.1.191" evidence="1"/>
<dbReference type="EMBL" id="CP001102">
    <property type="protein sequence ID" value="ACE05728.1"/>
    <property type="molecule type" value="Genomic_DNA"/>
</dbReference>
<dbReference type="RefSeq" id="WP_012472491.1">
    <property type="nucleotide sequence ID" value="NC_010830.1"/>
</dbReference>
<dbReference type="SMR" id="B3ER76"/>
<dbReference type="STRING" id="452471.Aasi_0290"/>
<dbReference type="KEGG" id="aas:Aasi_0290"/>
<dbReference type="eggNOG" id="COG1044">
    <property type="taxonomic scope" value="Bacteria"/>
</dbReference>
<dbReference type="HOGENOM" id="CLU_049865_0_0_10"/>
<dbReference type="OrthoDB" id="9784739at2"/>
<dbReference type="UniPathway" id="UPA00973"/>
<dbReference type="Proteomes" id="UP000001227">
    <property type="component" value="Chromosome"/>
</dbReference>
<dbReference type="GO" id="GO:0016020">
    <property type="term" value="C:membrane"/>
    <property type="evidence" value="ECO:0007669"/>
    <property type="project" value="GOC"/>
</dbReference>
<dbReference type="GO" id="GO:0016410">
    <property type="term" value="F:N-acyltransferase activity"/>
    <property type="evidence" value="ECO:0007669"/>
    <property type="project" value="InterPro"/>
</dbReference>
<dbReference type="GO" id="GO:0009245">
    <property type="term" value="P:lipid A biosynthetic process"/>
    <property type="evidence" value="ECO:0007669"/>
    <property type="project" value="UniProtKB-UniRule"/>
</dbReference>
<dbReference type="CDD" id="cd03352">
    <property type="entry name" value="LbH_LpxD"/>
    <property type="match status" value="1"/>
</dbReference>
<dbReference type="Gene3D" id="2.160.10.10">
    <property type="entry name" value="Hexapeptide repeat proteins"/>
    <property type="match status" value="1"/>
</dbReference>
<dbReference type="Gene3D" id="3.40.1390.10">
    <property type="entry name" value="MurE/MurF, N-terminal domain"/>
    <property type="match status" value="1"/>
</dbReference>
<dbReference type="HAMAP" id="MF_00523">
    <property type="entry name" value="LpxD"/>
    <property type="match status" value="1"/>
</dbReference>
<dbReference type="InterPro" id="IPR001451">
    <property type="entry name" value="Hexapep"/>
</dbReference>
<dbReference type="InterPro" id="IPR007691">
    <property type="entry name" value="LpxD"/>
</dbReference>
<dbReference type="InterPro" id="IPR011004">
    <property type="entry name" value="Trimer_LpxA-like_sf"/>
</dbReference>
<dbReference type="InterPro" id="IPR020573">
    <property type="entry name" value="UDP_GlcNAc_AcTrfase_non-rep"/>
</dbReference>
<dbReference type="NCBIfam" id="TIGR01853">
    <property type="entry name" value="lipid_A_lpxD"/>
    <property type="match status" value="1"/>
</dbReference>
<dbReference type="NCBIfam" id="NF002060">
    <property type="entry name" value="PRK00892.1"/>
    <property type="match status" value="1"/>
</dbReference>
<dbReference type="PANTHER" id="PTHR43378">
    <property type="entry name" value="UDP-3-O-ACYLGLUCOSAMINE N-ACYLTRANSFERASE"/>
    <property type="match status" value="1"/>
</dbReference>
<dbReference type="PANTHER" id="PTHR43378:SF2">
    <property type="entry name" value="UDP-3-O-ACYLGLUCOSAMINE N-ACYLTRANSFERASE 1, MITOCHONDRIAL-RELATED"/>
    <property type="match status" value="1"/>
</dbReference>
<dbReference type="Pfam" id="PF00132">
    <property type="entry name" value="Hexapep"/>
    <property type="match status" value="3"/>
</dbReference>
<dbReference type="Pfam" id="PF14602">
    <property type="entry name" value="Hexapep_2"/>
    <property type="match status" value="1"/>
</dbReference>
<dbReference type="Pfam" id="PF04613">
    <property type="entry name" value="LpxD"/>
    <property type="match status" value="1"/>
</dbReference>
<dbReference type="SUPFAM" id="SSF51161">
    <property type="entry name" value="Trimeric LpxA-like enzymes"/>
    <property type="match status" value="1"/>
</dbReference>
<comment type="function">
    <text evidence="1">Catalyzes the N-acylation of UDP-3-O-acylglucosamine using 3-hydroxyacyl-ACP as the acyl donor. Is involved in the biosynthesis of lipid A, a phosphorylated glycolipid that anchors the lipopolysaccharide to the outer membrane of the cell.</text>
</comment>
<comment type="catalytic activity">
    <reaction evidence="1">
        <text>a UDP-3-O-[(3R)-3-hydroxyacyl]-alpha-D-glucosamine + a (3R)-hydroxyacyl-[ACP] = a UDP-2-N,3-O-bis[(3R)-3-hydroxyacyl]-alpha-D-glucosamine + holo-[ACP] + H(+)</text>
        <dbReference type="Rhea" id="RHEA:53836"/>
        <dbReference type="Rhea" id="RHEA-COMP:9685"/>
        <dbReference type="Rhea" id="RHEA-COMP:9945"/>
        <dbReference type="ChEBI" id="CHEBI:15378"/>
        <dbReference type="ChEBI" id="CHEBI:64479"/>
        <dbReference type="ChEBI" id="CHEBI:78827"/>
        <dbReference type="ChEBI" id="CHEBI:137740"/>
        <dbReference type="ChEBI" id="CHEBI:137748"/>
        <dbReference type="EC" id="2.3.1.191"/>
    </reaction>
</comment>
<comment type="pathway">
    <text evidence="1">Bacterial outer membrane biogenesis; LPS lipid A biosynthesis.</text>
</comment>
<comment type="subunit">
    <text evidence="1">Homotrimer.</text>
</comment>
<comment type="similarity">
    <text evidence="1">Belongs to the transferase hexapeptide repeat family. LpxD subfamily.</text>
</comment>
<organism>
    <name type="scientific">Amoebophilus asiaticus (strain 5a2)</name>
    <dbReference type="NCBI Taxonomy" id="452471"/>
    <lineage>
        <taxon>Bacteria</taxon>
        <taxon>Pseudomonadati</taxon>
        <taxon>Bacteroidota</taxon>
        <taxon>Cytophagia</taxon>
        <taxon>Cytophagales</taxon>
        <taxon>Amoebophilaceae</taxon>
        <taxon>Candidatus Amoebophilus</taxon>
    </lineage>
</organism>
<accession>B3ER76</accession>
<evidence type="ECO:0000255" key="1">
    <source>
        <dbReference type="HAMAP-Rule" id="MF_00523"/>
    </source>
</evidence>
<gene>
    <name evidence="1" type="primary">lpxD</name>
    <name type="ordered locus">Aasi_0290</name>
</gene>
<sequence length="338" mass="36433">MVFTIKEIAQLIGGHVVGDASINIHKLCKIQEAIPGSITFLANPSYEKYLYTTQASAVIINNSFQPERSVSPSLILVEDPYASFTKLLAHYYQAVLNKHKVGVEEPAHLGKHVKLGNLVYRGAFSYIGDYVTLEDKVQIYPHTYIGDHVSIGENTIIYSGVKIYAGCQIGKNCIIHAGAVVGSNGFGFAPQPTGSYEKIPQVGGVILEDNIEIGANTTIDRATLGNTLIKQGTKIDNLVQIAHNVEVGKDTVIAALTGIAGSTKIGNNCMLGGQVGVAGHTEMGDRTVVAGQAGVTKSYKKGNVTLMGMPAIERKKYLKNYAIFKQLQNILQIKKDEQ</sequence>
<protein>
    <recommendedName>
        <fullName evidence="1">UDP-3-O-acylglucosamine N-acyltransferase</fullName>
        <ecNumber evidence="1">2.3.1.191</ecNumber>
    </recommendedName>
</protein>
<reference key="1">
    <citation type="journal article" date="2010" name="J. Bacteriol.">
        <title>The genome of the amoeba symbiont 'Candidatus Amoebophilus asiaticus' reveals common mechanisms for host cell interaction among amoeba-associated bacteria.</title>
        <authorList>
            <person name="Schmitz-Esser S."/>
            <person name="Tischler P."/>
            <person name="Arnold R."/>
            <person name="Montanaro J."/>
            <person name="Wagner M."/>
            <person name="Rattei T."/>
            <person name="Horn M."/>
        </authorList>
    </citation>
    <scope>NUCLEOTIDE SEQUENCE [LARGE SCALE GENOMIC DNA]</scope>
    <source>
        <strain>5a2</strain>
    </source>
</reference>
<proteinExistence type="inferred from homology"/>
<name>LPXD_AMOA5</name>
<feature type="chain" id="PRO_1000127659" description="UDP-3-O-acylglucosamine N-acyltransferase">
    <location>
        <begin position="1"/>
        <end position="338"/>
    </location>
</feature>
<feature type="active site" description="Proton acceptor" evidence="1">
    <location>
        <position position="243"/>
    </location>
</feature>